<organism>
    <name type="scientific">Cauliflower mosaic virus (strain Strasbourg)</name>
    <name type="common">CaMV</name>
    <dbReference type="NCBI Taxonomy" id="10648"/>
    <lineage>
        <taxon>Viruses</taxon>
        <taxon>Riboviria</taxon>
        <taxon>Pararnavirae</taxon>
        <taxon>Artverviricota</taxon>
        <taxon>Revtraviricetes</taxon>
        <taxon>Ortervirales</taxon>
        <taxon>Caulimoviridae</taxon>
        <taxon>Caulimovirus</taxon>
        <taxon>Caulimovirus tessellobrassicae</taxon>
    </lineage>
</organism>
<reference key="1">
    <citation type="journal article" date="1980" name="Cell">
        <title>Nucleotide sequence of cauliflower mosaic virus DNA.</title>
        <authorList>
            <person name="Franck A."/>
            <person name="Guilley H."/>
            <person name="Jonard G."/>
            <person name="Richards K."/>
            <person name="Hirth L."/>
        </authorList>
    </citation>
    <scope>NUCLEOTIDE SEQUENCE [GENOMIC DNA]</scope>
</reference>
<reference key="2">
    <citation type="journal article" date="1994" name="Virology">
        <title>The full-length product of cauliflower mosaic virus open reading frame III is associated with the viral particle.</title>
        <authorList>
            <person name="Dautel S."/>
            <person name="Guidasci T."/>
            <person name="Pique M."/>
            <person name="Mougeot J.L."/>
            <person name="Lebeurier G."/>
            <person name="Yot P."/>
            <person name="Mesnard J.M."/>
        </authorList>
    </citation>
    <scope>SUBCELLULAR LOCATION</scope>
</reference>
<reference key="3">
    <citation type="journal article" date="1998" name="J. Biol. Chem.">
        <title>The open reading frame III product of cauliflower mosaic virus forms a tetramer through a N-terminal coiled-coil.</title>
        <authorList>
            <person name="Leclerc D."/>
            <person name="Burri L."/>
            <person name="Kajava A.V."/>
            <person name="Mougeot J.L."/>
            <person name="Hess D."/>
            <person name="Lustig A."/>
            <person name="Kleemann G."/>
            <person name="Hohn T."/>
        </authorList>
    </citation>
    <scope>HOMOTETRAMER</scope>
</reference>
<reference key="4">
    <citation type="journal article" date="2001" name="Virus Genes">
        <title>The product of ORF III in cauliflower mosaic virus interacts with the viral coat protein through its C-terminal proline rich domain.</title>
        <authorList>
            <person name="Leclerc D."/>
            <person name="Stavolone L."/>
            <person name="Meier E."/>
            <person name="Guerra-Peraza O."/>
            <person name="Herzog E."/>
            <person name="Hohn T."/>
        </authorList>
    </citation>
    <scope>INTERACTION WITH CAPSID PROTEIN</scope>
    <scope>MUTAGENESIS OF ASN-127; GLN-128 AND PHE-129</scope>
    <scope>FUNCTION</scope>
</reference>
<reference key="5">
    <citation type="journal article" date="2005" name="J. Mol. Biol.">
        <title>Structure of the mature P3-virus particle complex of cauliflower mosaic virus revealed by cryo-electron microscopy.</title>
        <authorList>
            <person name="Plisson C."/>
            <person name="Uzest M."/>
            <person name="Drucker M."/>
            <person name="Froissart R."/>
            <person name="Dumas C."/>
            <person name="Conway J."/>
            <person name="Thomas D."/>
            <person name="Blanc S."/>
            <person name="Bron P."/>
        </authorList>
    </citation>
    <scope>HOMOTRIMER</scope>
</reference>
<reference key="6">
    <citation type="journal article" date="2010" name="J. Virol.">
        <title>Structural insights into the molecular mechanisms of cauliflower mosaic virus transmission by its insect vector.</title>
        <authorList>
            <person name="Hoh F."/>
            <person name="Uzest M."/>
            <person name="Drucker M."/>
            <person name="Plisson-Chastang C."/>
            <person name="Bron P."/>
            <person name="Blanc S."/>
            <person name="Dumas C."/>
        </authorList>
    </citation>
    <scope>X-RAY CRYSTALLOGRAPHY (2.59 ANGSTROMS) OF 1-95</scope>
    <scope>INTERACTION WITH MP</scope>
    <scope>DISULFIDE BOND</scope>
</reference>
<dbReference type="EMBL" id="V00141">
    <property type="protein sequence ID" value="CAA23458.1"/>
    <property type="molecule type" value="Genomic_DNA"/>
</dbReference>
<dbReference type="PIR" id="C90799">
    <property type="entry name" value="QQCV3"/>
</dbReference>
<dbReference type="RefSeq" id="NP_056726.1">
    <property type="nucleotide sequence ID" value="NC_001497.1"/>
</dbReference>
<dbReference type="PDB" id="3F6N">
    <property type="method" value="X-ray"/>
    <property type="resolution" value="3.10 A"/>
    <property type="chains" value="A/B/C/D=1-129"/>
</dbReference>
<dbReference type="PDB" id="3K4T">
    <property type="method" value="X-ray"/>
    <property type="resolution" value="2.59 A"/>
    <property type="chains" value="A/B/C/D=1-95"/>
</dbReference>
<dbReference type="PDBsum" id="3F6N"/>
<dbReference type="PDBsum" id="3K4T"/>
<dbReference type="SMR" id="P03551"/>
<dbReference type="KEGG" id="vg:1489543"/>
<dbReference type="EvolutionaryTrace" id="P03551"/>
<dbReference type="Proteomes" id="UP000002501">
    <property type="component" value="Genome"/>
</dbReference>
<dbReference type="GO" id="GO:0044219">
    <property type="term" value="C:host cell plasmodesma"/>
    <property type="evidence" value="ECO:0007669"/>
    <property type="project" value="UniProtKB-SubCell"/>
</dbReference>
<dbReference type="GO" id="GO:0044423">
    <property type="term" value="C:virion component"/>
    <property type="evidence" value="ECO:0007669"/>
    <property type="project" value="UniProtKB-KW"/>
</dbReference>
<dbReference type="GO" id="GO:0003677">
    <property type="term" value="F:DNA binding"/>
    <property type="evidence" value="ECO:0007669"/>
    <property type="project" value="InterPro"/>
</dbReference>
<dbReference type="Gene3D" id="6.10.250.630">
    <property type="match status" value="1"/>
</dbReference>
<dbReference type="InterPro" id="IPR004986">
    <property type="entry name" value="Caulimo_virion-assoc"/>
</dbReference>
<dbReference type="Pfam" id="PF03310">
    <property type="entry name" value="Cauli_DNA-bind"/>
    <property type="match status" value="1"/>
</dbReference>
<organismHost>
    <name type="scientific">Arabidopsis thaliana</name>
    <name type="common">Mouse-ear cress</name>
    <dbReference type="NCBI Taxonomy" id="3702"/>
</organismHost>
<organismHost>
    <name type="scientific">Brassica</name>
    <dbReference type="NCBI Taxonomy" id="3705"/>
</organismHost>
<organismHost>
    <name type="scientific">Raphanus</name>
    <dbReference type="NCBI Taxonomy" id="3725"/>
</organismHost>
<keyword id="KW-0002">3D-structure</keyword>
<keyword id="KW-0175">Coiled coil</keyword>
<keyword id="KW-1015">Disulfide bond</keyword>
<keyword id="KW-1031">Host cell junction</keyword>
<keyword id="KW-1185">Reference proteome</keyword>
<keyword id="KW-0946">Virion</keyword>
<feature type="chain" id="PRO_0000222080" description="Virion-associated protein">
    <location>
        <begin position="1"/>
        <end position="129"/>
    </location>
</feature>
<feature type="region of interest" description="Capsid binding" evidence="6">
    <location>
        <begin position="122"/>
        <end position="129"/>
    </location>
</feature>
<feature type="coiled-coil region" evidence="1">
    <location>
        <begin position="1"/>
        <end position="31"/>
    </location>
</feature>
<feature type="coiled-coil region" evidence="1">
    <location>
        <begin position="38"/>
        <end position="59"/>
    </location>
</feature>
<feature type="disulfide bond" description="Interchain (with C-62 in multimeric partner 1)" evidence="3">
    <location>
        <position position="60"/>
    </location>
</feature>
<feature type="disulfide bond" description="Interchain (with C-60 in multimeric partner 2)" evidence="3">
    <location>
        <position position="62"/>
    </location>
</feature>
<feature type="mutagenesis site" description="Partial loss of capsid binding." evidence="2">
    <original>N</original>
    <variation>A</variation>
    <location>
        <position position="127"/>
    </location>
</feature>
<feature type="mutagenesis site" description="Partial loss of capsid binding." evidence="2">
    <original>Q</original>
    <variation>A</variation>
    <location>
        <position position="128"/>
    </location>
</feature>
<feature type="mutagenesis site" description="Complete loss of capsid binding." evidence="2">
    <original>F</original>
    <variation>A</variation>
    <location>
        <position position="129"/>
    </location>
</feature>
<feature type="helix" evidence="7">
    <location>
        <begin position="3"/>
        <end position="32"/>
    </location>
</feature>
<feature type="helix" evidence="7">
    <location>
        <begin position="38"/>
        <end position="59"/>
    </location>
</feature>
<feature type="helix" evidence="7">
    <location>
        <begin position="63"/>
        <end position="70"/>
    </location>
</feature>
<name>VAP_CAMVS</name>
<comment type="function">
    <text evidence="2">Plays a role in virus cell-to-cell and plant-to-plant transmission. Interacts with virion icosahedral capsid and movement protein, thereby facilitating virion cell-to-cell transmission through plasmodesmata opened by viral movement protein. Also interacts with aphid transmission factor, attaching the virion to aphid stylet when the animal feeds on an virus infected plant. Aphid saliva may later detach the virion, inducing release of infectious particles when the animal feeds on a new plant.</text>
</comment>
<comment type="subunit">
    <text evidence="2 3">Homotetramer, through coiled-coil domain. Homotrimer when bound on icosehadral capsid. Interacts with capsid protein, and with movement protein.</text>
</comment>
<comment type="subcellular location">
    <subcellularLocation>
        <location evidence="4">Virion</location>
    </subcellularLocation>
    <subcellularLocation>
        <location evidence="4">Host cell junction</location>
        <location evidence="4">Host plasmodesma</location>
    </subcellularLocation>
</comment>
<comment type="similarity">
    <text evidence="5">Belongs to the caulimovirus ORF III family.</text>
</comment>
<sequence>MANLNQIQKEVSEILSDQKSMKADIKAILELLGSQNPIKESLETVAAKIVNDLTKLINDCPCNKEILEALGTQPKEQLIEQPKEKGKGLNLGKYSYPNYGVGNEELGSSGNPKALTWPFKAPAGWPNQF</sequence>
<gene>
    <name type="ORF">ORF III</name>
</gene>
<proteinExistence type="evidence at protein level"/>
<accession>P03551</accession>
<evidence type="ECO:0000255" key="1"/>
<evidence type="ECO:0000269" key="2">
    <source>
    </source>
</evidence>
<evidence type="ECO:0000269" key="3">
    <source>
    </source>
</evidence>
<evidence type="ECO:0000269" key="4">
    <source>
    </source>
</evidence>
<evidence type="ECO:0000305" key="5"/>
<evidence type="ECO:0000305" key="6">
    <source>
    </source>
</evidence>
<evidence type="ECO:0007829" key="7">
    <source>
        <dbReference type="PDB" id="3K4T"/>
    </source>
</evidence>
<protein>
    <recommendedName>
        <fullName>Virion-associated protein</fullName>
        <shortName>Vap</shortName>
    </recommendedName>
    <alternativeName>
        <fullName>Protein 3</fullName>
        <shortName>P3</shortName>
    </alternativeName>
</protein>